<keyword id="KW-0255">Endonuclease</keyword>
<keyword id="KW-0378">Hydrolase</keyword>
<keyword id="KW-0540">Nuclease</keyword>
<keyword id="KW-0694">RNA-binding</keyword>
<keyword id="KW-0699">rRNA-binding</keyword>
<comment type="function">
    <text evidence="1">Acts as a ribosome collision sensor. Detects stalled/collided disomes (pairs of ribosomes where the leading ribosome is stalled and a second ribosome has collided with it) and endonucleolytically cleaves mRNA at the 5' boundary of the stalled ribosome. Stalled/collided disomes form a new interface (primarily via the 30S subunits) that binds SmrB. Cleaved mRNA becomes available for tmRNA ligation, leading to ribosomal subunit dissociation and rescue of stalled ribosomes.</text>
</comment>
<comment type="subunit">
    <text evidence="1">Associates with collided ribosomes, but not with correctly translating polysomes.</text>
</comment>
<comment type="similarity">
    <text evidence="1">Belongs to the SmrB family.</text>
</comment>
<gene>
    <name evidence="1" type="primary">smrB</name>
    <name type="ordered locus">SeSA_A2615</name>
</gene>
<dbReference type="EC" id="3.1.-.-" evidence="1"/>
<dbReference type="EMBL" id="CP001127">
    <property type="protein sequence ID" value="ACF91463.1"/>
    <property type="molecule type" value="Genomic_DNA"/>
</dbReference>
<dbReference type="RefSeq" id="WP_000730794.1">
    <property type="nucleotide sequence ID" value="NC_011094.1"/>
</dbReference>
<dbReference type="SMR" id="B4TQC0"/>
<dbReference type="KEGG" id="sew:SeSA_A2615"/>
<dbReference type="HOGENOM" id="CLU_055978_4_0_6"/>
<dbReference type="Proteomes" id="UP000001865">
    <property type="component" value="Chromosome"/>
</dbReference>
<dbReference type="GO" id="GO:0004521">
    <property type="term" value="F:RNA endonuclease activity"/>
    <property type="evidence" value="ECO:0007669"/>
    <property type="project" value="UniProtKB-UniRule"/>
</dbReference>
<dbReference type="GO" id="GO:0019843">
    <property type="term" value="F:rRNA binding"/>
    <property type="evidence" value="ECO:0007669"/>
    <property type="project" value="UniProtKB-UniRule"/>
</dbReference>
<dbReference type="GO" id="GO:0072344">
    <property type="term" value="P:rescue of stalled ribosome"/>
    <property type="evidence" value="ECO:0007669"/>
    <property type="project" value="UniProtKB-UniRule"/>
</dbReference>
<dbReference type="Gene3D" id="3.30.1370.110">
    <property type="match status" value="1"/>
</dbReference>
<dbReference type="HAMAP" id="MF_01042">
    <property type="entry name" value="SmrB"/>
    <property type="match status" value="1"/>
</dbReference>
<dbReference type="InterPro" id="IPR002625">
    <property type="entry name" value="Smr_dom"/>
</dbReference>
<dbReference type="InterPro" id="IPR036063">
    <property type="entry name" value="Smr_dom_sf"/>
</dbReference>
<dbReference type="InterPro" id="IPR022990">
    <property type="entry name" value="SmrB-like"/>
</dbReference>
<dbReference type="NCBIfam" id="NF003432">
    <property type="entry name" value="PRK04946.1"/>
    <property type="match status" value="1"/>
</dbReference>
<dbReference type="PANTHER" id="PTHR35562">
    <property type="entry name" value="DNA ENDONUCLEASE SMRA-RELATED"/>
    <property type="match status" value="1"/>
</dbReference>
<dbReference type="PANTHER" id="PTHR35562:SF1">
    <property type="entry name" value="UPF0115 PROTEIN YFCN"/>
    <property type="match status" value="1"/>
</dbReference>
<dbReference type="Pfam" id="PF01713">
    <property type="entry name" value="Smr"/>
    <property type="match status" value="1"/>
</dbReference>
<dbReference type="SMART" id="SM00463">
    <property type="entry name" value="SMR"/>
    <property type="match status" value="1"/>
</dbReference>
<dbReference type="SUPFAM" id="SSF160443">
    <property type="entry name" value="SMR domain-like"/>
    <property type="match status" value="1"/>
</dbReference>
<dbReference type="PROSITE" id="PS50828">
    <property type="entry name" value="SMR"/>
    <property type="match status" value="1"/>
</dbReference>
<evidence type="ECO:0000255" key="1">
    <source>
        <dbReference type="HAMAP-Rule" id="MF_01042"/>
    </source>
</evidence>
<accession>B4TQC0</accession>
<feature type="chain" id="PRO_1000136054" description="Ribosome rescue factor SmrB">
    <location>
        <begin position="1"/>
        <end position="183"/>
    </location>
</feature>
<feature type="domain" description="Smr" evidence="1">
    <location>
        <begin position="98"/>
        <end position="173"/>
    </location>
</feature>
<name>SMRB_SALSV</name>
<sequence length="183" mass="21177">MKKKTSLSEEDQALFRQLMVGTRKIKQDTIVHRPLRKKITEVPTRRLIQEQADASHYFSDEFQPLLNTEGPVKYVREDVSHFELKKMRRGDYSPELFLDLHGLTQLQAKQELGALIAACRREHIFCACVMHGHGKHILKQQTPLWLAQHPHVMAFHQAPKEYGGDAALLVLIEVEEWQPPELP</sequence>
<reference key="1">
    <citation type="journal article" date="2011" name="J. Bacteriol.">
        <title>Comparative genomics of 28 Salmonella enterica isolates: evidence for CRISPR-mediated adaptive sublineage evolution.</title>
        <authorList>
            <person name="Fricke W.F."/>
            <person name="Mammel M.K."/>
            <person name="McDermott P.F."/>
            <person name="Tartera C."/>
            <person name="White D.G."/>
            <person name="Leclerc J.E."/>
            <person name="Ravel J."/>
            <person name="Cebula T.A."/>
        </authorList>
    </citation>
    <scope>NUCLEOTIDE SEQUENCE [LARGE SCALE GENOMIC DNA]</scope>
    <source>
        <strain>CVM19633</strain>
    </source>
</reference>
<organism>
    <name type="scientific">Salmonella schwarzengrund (strain CVM19633)</name>
    <dbReference type="NCBI Taxonomy" id="439843"/>
    <lineage>
        <taxon>Bacteria</taxon>
        <taxon>Pseudomonadati</taxon>
        <taxon>Pseudomonadota</taxon>
        <taxon>Gammaproteobacteria</taxon>
        <taxon>Enterobacterales</taxon>
        <taxon>Enterobacteriaceae</taxon>
        <taxon>Salmonella</taxon>
    </lineage>
</organism>
<proteinExistence type="inferred from homology"/>
<protein>
    <recommendedName>
        <fullName evidence="1">Ribosome rescue factor SmrB</fullName>
        <ecNumber evidence="1">3.1.-.-</ecNumber>
    </recommendedName>
</protein>